<sequence>MKANELREKSAQQLNEQLLGLLRDQFNLRMQKATGQLGQSHLLSQVKRDIARVKTVLNQQAGK</sequence>
<feature type="chain" id="PRO_1000205634" description="Large ribosomal subunit protein uL29">
    <location>
        <begin position="1"/>
        <end position="63"/>
    </location>
</feature>
<protein>
    <recommendedName>
        <fullName evidence="1">Large ribosomal subunit protein uL29</fullName>
    </recommendedName>
    <alternativeName>
        <fullName evidence="2">50S ribosomal protein L29</fullName>
    </alternativeName>
</protein>
<keyword id="KW-0687">Ribonucleoprotein</keyword>
<keyword id="KW-0689">Ribosomal protein</keyword>
<name>RL29_PSEFS</name>
<accession>C3K2W8</accession>
<organism>
    <name type="scientific">Pseudomonas fluorescens (strain SBW25)</name>
    <dbReference type="NCBI Taxonomy" id="216595"/>
    <lineage>
        <taxon>Bacteria</taxon>
        <taxon>Pseudomonadati</taxon>
        <taxon>Pseudomonadota</taxon>
        <taxon>Gammaproteobacteria</taxon>
        <taxon>Pseudomonadales</taxon>
        <taxon>Pseudomonadaceae</taxon>
        <taxon>Pseudomonas</taxon>
    </lineage>
</organism>
<reference key="1">
    <citation type="journal article" date="2009" name="Genome Biol.">
        <title>Genomic and genetic analyses of diversity and plant interactions of Pseudomonas fluorescens.</title>
        <authorList>
            <person name="Silby M.W."/>
            <person name="Cerdeno-Tarraga A.M."/>
            <person name="Vernikos G.S."/>
            <person name="Giddens S.R."/>
            <person name="Jackson R.W."/>
            <person name="Preston G.M."/>
            <person name="Zhang X.-X."/>
            <person name="Moon C.D."/>
            <person name="Gehrig S.M."/>
            <person name="Godfrey S.A.C."/>
            <person name="Knight C.G."/>
            <person name="Malone J.G."/>
            <person name="Robinson Z."/>
            <person name="Spiers A.J."/>
            <person name="Harris S."/>
            <person name="Challis G.L."/>
            <person name="Yaxley A.M."/>
            <person name="Harris D."/>
            <person name="Seeger K."/>
            <person name="Murphy L."/>
            <person name="Rutter S."/>
            <person name="Squares R."/>
            <person name="Quail M.A."/>
            <person name="Saunders E."/>
            <person name="Mavromatis K."/>
            <person name="Brettin T.S."/>
            <person name="Bentley S.D."/>
            <person name="Hothersall J."/>
            <person name="Stephens E."/>
            <person name="Thomas C.M."/>
            <person name="Parkhill J."/>
            <person name="Levy S.B."/>
            <person name="Rainey P.B."/>
            <person name="Thomson N.R."/>
        </authorList>
    </citation>
    <scope>NUCLEOTIDE SEQUENCE [LARGE SCALE GENOMIC DNA]</scope>
    <source>
        <strain>SBW25</strain>
    </source>
</reference>
<dbReference type="EMBL" id="AM181176">
    <property type="protein sequence ID" value="CAY52752.1"/>
    <property type="molecule type" value="Genomic_DNA"/>
</dbReference>
<dbReference type="RefSeq" id="WP_002555481.1">
    <property type="nucleotide sequence ID" value="NC_012660.1"/>
</dbReference>
<dbReference type="SMR" id="C3K2W8"/>
<dbReference type="STRING" id="294.SRM1_05171"/>
<dbReference type="GeneID" id="98285430"/>
<dbReference type="eggNOG" id="COG0255">
    <property type="taxonomic scope" value="Bacteria"/>
</dbReference>
<dbReference type="HOGENOM" id="CLU_158491_1_2_6"/>
<dbReference type="OrthoDB" id="9815192at2"/>
<dbReference type="GO" id="GO:0022625">
    <property type="term" value="C:cytosolic large ribosomal subunit"/>
    <property type="evidence" value="ECO:0007669"/>
    <property type="project" value="TreeGrafter"/>
</dbReference>
<dbReference type="GO" id="GO:0003735">
    <property type="term" value="F:structural constituent of ribosome"/>
    <property type="evidence" value="ECO:0007669"/>
    <property type="project" value="InterPro"/>
</dbReference>
<dbReference type="GO" id="GO:0006412">
    <property type="term" value="P:translation"/>
    <property type="evidence" value="ECO:0007669"/>
    <property type="project" value="UniProtKB-UniRule"/>
</dbReference>
<dbReference type="CDD" id="cd00427">
    <property type="entry name" value="Ribosomal_L29_HIP"/>
    <property type="match status" value="1"/>
</dbReference>
<dbReference type="FunFam" id="1.10.287.310:FF:000001">
    <property type="entry name" value="50S ribosomal protein L29"/>
    <property type="match status" value="1"/>
</dbReference>
<dbReference type="Gene3D" id="1.10.287.310">
    <property type="match status" value="1"/>
</dbReference>
<dbReference type="HAMAP" id="MF_00374">
    <property type="entry name" value="Ribosomal_uL29"/>
    <property type="match status" value="1"/>
</dbReference>
<dbReference type="InterPro" id="IPR050063">
    <property type="entry name" value="Ribosomal_protein_uL29"/>
</dbReference>
<dbReference type="InterPro" id="IPR001854">
    <property type="entry name" value="Ribosomal_uL29"/>
</dbReference>
<dbReference type="InterPro" id="IPR018254">
    <property type="entry name" value="Ribosomal_uL29_CS"/>
</dbReference>
<dbReference type="InterPro" id="IPR036049">
    <property type="entry name" value="Ribosomal_uL29_sf"/>
</dbReference>
<dbReference type="NCBIfam" id="TIGR00012">
    <property type="entry name" value="L29"/>
    <property type="match status" value="1"/>
</dbReference>
<dbReference type="PANTHER" id="PTHR10916">
    <property type="entry name" value="60S RIBOSOMAL PROTEIN L35/50S RIBOSOMAL PROTEIN L29"/>
    <property type="match status" value="1"/>
</dbReference>
<dbReference type="PANTHER" id="PTHR10916:SF0">
    <property type="entry name" value="LARGE RIBOSOMAL SUBUNIT PROTEIN UL29C"/>
    <property type="match status" value="1"/>
</dbReference>
<dbReference type="Pfam" id="PF00831">
    <property type="entry name" value="Ribosomal_L29"/>
    <property type="match status" value="1"/>
</dbReference>
<dbReference type="SUPFAM" id="SSF46561">
    <property type="entry name" value="Ribosomal protein L29 (L29p)"/>
    <property type="match status" value="1"/>
</dbReference>
<dbReference type="PROSITE" id="PS00579">
    <property type="entry name" value="RIBOSOMAL_L29"/>
    <property type="match status" value="1"/>
</dbReference>
<evidence type="ECO:0000255" key="1">
    <source>
        <dbReference type="HAMAP-Rule" id="MF_00374"/>
    </source>
</evidence>
<evidence type="ECO:0000305" key="2"/>
<proteinExistence type="inferred from homology"/>
<comment type="similarity">
    <text evidence="1">Belongs to the universal ribosomal protein uL29 family.</text>
</comment>
<gene>
    <name evidence="1" type="primary">rpmC</name>
    <name type="ordered locus">PFLU_5519</name>
</gene>